<evidence type="ECO:0000255" key="1">
    <source>
        <dbReference type="HAMAP-Rule" id="MF_01505"/>
    </source>
</evidence>
<evidence type="ECO:0000256" key="2">
    <source>
        <dbReference type="SAM" id="MobiDB-lite"/>
    </source>
</evidence>
<protein>
    <recommendedName>
        <fullName evidence="1">Small, acid-soluble spore protein N</fullName>
        <shortName evidence="1">SASP N</shortName>
    </recommendedName>
</protein>
<feature type="chain" id="PRO_0000221470" description="Small, acid-soluble spore protein N">
    <location>
        <begin position="1"/>
        <end position="47"/>
    </location>
</feature>
<feature type="region of interest" description="Disordered" evidence="2">
    <location>
        <begin position="1"/>
        <end position="47"/>
    </location>
</feature>
<keyword id="KW-1185">Reference proteome</keyword>
<keyword id="KW-0749">Sporulation</keyword>
<organism>
    <name type="scientific">Bacillus licheniformis (strain ATCC 14580 / DSM 13 / JCM 2505 / CCUG 7422 / NBRC 12200 / NCIMB 9375 / NCTC 10341 / NRRL NRS-1264 / Gibson 46)</name>
    <dbReference type="NCBI Taxonomy" id="279010"/>
    <lineage>
        <taxon>Bacteria</taxon>
        <taxon>Bacillati</taxon>
        <taxon>Bacillota</taxon>
        <taxon>Bacilli</taxon>
        <taxon>Bacillales</taxon>
        <taxon>Bacillaceae</taxon>
        <taxon>Bacillus</taxon>
    </lineage>
</organism>
<reference key="1">
    <citation type="journal article" date="2004" name="J. Mol. Microbiol. Biotechnol.">
        <title>The complete genome sequence of Bacillus licheniformis DSM13, an organism with great industrial potential.</title>
        <authorList>
            <person name="Veith B."/>
            <person name="Herzberg C."/>
            <person name="Steckel S."/>
            <person name="Feesche J."/>
            <person name="Maurer K.H."/>
            <person name="Ehrenreich P."/>
            <person name="Baeumer S."/>
            <person name="Henne A."/>
            <person name="Liesegang H."/>
            <person name="Merkl R."/>
            <person name="Ehrenreich A."/>
            <person name="Gottschalk G."/>
        </authorList>
    </citation>
    <scope>NUCLEOTIDE SEQUENCE [LARGE SCALE GENOMIC DNA]</scope>
    <source>
        <strain>ATCC 14580 / DSM 13 / JCM 2505 / CCUG 7422 / NBRC 12200 / NCIMB 9375 / NCTC 10341 / NRRL NRS-1264 / Gibson 46</strain>
    </source>
</reference>
<reference key="2">
    <citation type="journal article" date="2004" name="Genome Biol.">
        <title>Complete genome sequence of the industrial bacterium Bacillus licheniformis and comparisons with closely related Bacillus species.</title>
        <authorList>
            <person name="Rey M.W."/>
            <person name="Ramaiya P."/>
            <person name="Nelson B.A."/>
            <person name="Brody-Karpin S.D."/>
            <person name="Zaretsky E.J."/>
            <person name="Tang M."/>
            <person name="Lopez de Leon A."/>
            <person name="Xiang H."/>
            <person name="Gusti V."/>
            <person name="Clausen I.G."/>
            <person name="Olsen P.B."/>
            <person name="Rasmussen M.D."/>
            <person name="Andersen J.T."/>
            <person name="Joergensen P.L."/>
            <person name="Larsen T.S."/>
            <person name="Sorokin A."/>
            <person name="Bolotin A."/>
            <person name="Lapidus A."/>
            <person name="Galleron N."/>
            <person name="Ehrlich S.D."/>
            <person name="Berka R.M."/>
        </authorList>
    </citation>
    <scope>NUCLEOTIDE SEQUENCE [LARGE SCALE GENOMIC DNA]</scope>
    <source>
        <strain>ATCC 14580 / DSM 13 / JCM 2505 / CCUG 7422 / NBRC 12200 / NCIMB 9375 / NCTC 10341 / NRRL NRS-1264 / Gibson 46</strain>
    </source>
</reference>
<dbReference type="EMBL" id="AE017333">
    <property type="protein sequence ID" value="AAU40940.1"/>
    <property type="molecule type" value="Genomic_DNA"/>
</dbReference>
<dbReference type="EMBL" id="CP000002">
    <property type="protein sequence ID" value="AAU23578.1"/>
    <property type="molecule type" value="Genomic_DNA"/>
</dbReference>
<dbReference type="RefSeq" id="WP_003182261.1">
    <property type="nucleotide sequence ID" value="NC_006322.1"/>
</dbReference>
<dbReference type="STRING" id="279010.BL02943"/>
<dbReference type="KEGG" id="bld:BLi02050"/>
<dbReference type="KEGG" id="bli:BL02943"/>
<dbReference type="HOGENOM" id="CLU_216714_0_0_9"/>
<dbReference type="Proteomes" id="UP000000606">
    <property type="component" value="Chromosome"/>
</dbReference>
<dbReference type="GO" id="GO:0042601">
    <property type="term" value="C:endospore-forming forespore"/>
    <property type="evidence" value="ECO:0007669"/>
    <property type="project" value="InterPro"/>
</dbReference>
<dbReference type="GO" id="GO:0030436">
    <property type="term" value="P:asexual sporulation"/>
    <property type="evidence" value="ECO:0007669"/>
    <property type="project" value="UniProtKB-UniRule"/>
</dbReference>
<dbReference type="GO" id="GO:0030435">
    <property type="term" value="P:sporulation resulting in formation of a cellular spore"/>
    <property type="evidence" value="ECO:0007669"/>
    <property type="project" value="UniProtKB-KW"/>
</dbReference>
<dbReference type="HAMAP" id="MF_01505">
    <property type="entry name" value="SspN"/>
    <property type="match status" value="1"/>
</dbReference>
<dbReference type="InterPro" id="IPR012612">
    <property type="entry name" value="SASP_SspN"/>
</dbReference>
<dbReference type="NCBIfam" id="NF006904">
    <property type="entry name" value="PRK09398.1"/>
    <property type="match status" value="1"/>
</dbReference>
<dbReference type="Pfam" id="PF08177">
    <property type="entry name" value="SspN"/>
    <property type="match status" value="1"/>
</dbReference>
<sequence length="47" mass="5407">MPREHDKQSKFAPSHLGTKPVEYKRNKGKKMHDKSGETPIIMQTKGE</sequence>
<gene>
    <name evidence="1" type="primary">sspN</name>
    <name type="ordered locus">BLi02050</name>
    <name type="ordered locus">BL02943</name>
</gene>
<name>SSPN_BACLD</name>
<proteinExistence type="inferred from homology"/>
<accession>Q65J24</accession>
<comment type="subcellular location">
    <subcellularLocation>
        <location evidence="1">Spore core</location>
    </subcellularLocation>
</comment>
<comment type="induction">
    <text evidence="1">Expressed only in the forespore compartment of sporulating cells.</text>
</comment>
<comment type="similarity">
    <text evidence="1">Belongs to the SspN family.</text>
</comment>